<reference key="1">
    <citation type="journal article" date="2000" name="DNA Res.">
        <title>Structural analysis of Arabidopsis thaliana chromosome 3. I. Sequence features of the regions of 4,504,864 bp covered by sixty P1 and TAC clones.</title>
        <authorList>
            <person name="Sato S."/>
            <person name="Nakamura Y."/>
            <person name="Kaneko T."/>
            <person name="Katoh T."/>
            <person name="Asamizu E."/>
            <person name="Tabata S."/>
        </authorList>
    </citation>
    <scope>NUCLEOTIDE SEQUENCE [LARGE SCALE GENOMIC DNA]</scope>
    <source>
        <strain>cv. Columbia</strain>
    </source>
</reference>
<reference key="2">
    <citation type="journal article" date="2017" name="Plant J.">
        <title>Araport11: a complete reannotation of the Arabidopsis thaliana reference genome.</title>
        <authorList>
            <person name="Cheng C.Y."/>
            <person name="Krishnakumar V."/>
            <person name="Chan A.P."/>
            <person name="Thibaud-Nissen F."/>
            <person name="Schobel S."/>
            <person name="Town C.D."/>
        </authorList>
    </citation>
    <scope>GENOME REANNOTATION</scope>
    <source>
        <strain>cv. Columbia</strain>
    </source>
</reference>
<reference key="3">
    <citation type="journal article" date="2001" name="Plant Physiol.">
        <title>A superfamily of proteins with novel cysteine-rich repeats.</title>
        <authorList>
            <person name="Chen Z."/>
        </authorList>
    </citation>
    <scope>GENE FAMILY ORGANIZATION</scope>
    <scope>NOMENCLATURE</scope>
</reference>
<gene>
    <name type="primary">CRRSP35</name>
    <name type="ordered locus">At3g22050</name>
    <name type="ORF">MZN24.23</name>
</gene>
<accession>Q9LRK2</accession>
<protein>
    <recommendedName>
        <fullName>Putative cysteine-rich repeat secretory protein 35</fullName>
    </recommendedName>
</protein>
<feature type="signal peptide" evidence="1">
    <location>
        <begin position="1"/>
        <end position="29"/>
    </location>
</feature>
<feature type="chain" id="PRO_0000296163" description="Putative cysteine-rich repeat secretory protein 35">
    <location>
        <begin position="30"/>
        <end position="258"/>
    </location>
</feature>
<feature type="domain" description="Gnk2-homologous 1" evidence="2">
    <location>
        <begin position="36"/>
        <end position="138"/>
    </location>
</feature>
<feature type="domain" description="Gnk2-homologous 2" evidence="2">
    <location>
        <begin position="146"/>
        <end position="255"/>
    </location>
</feature>
<proteinExistence type="inferred from homology"/>
<comment type="subcellular location">
    <subcellularLocation>
        <location evidence="3">Secreted</location>
    </subcellularLocation>
</comment>
<comment type="similarity">
    <text evidence="3">Belongs to the cysteine-rich repeat secretory protein family.</text>
</comment>
<sequence length="258" mass="29634">MYSSYSLSKRLIYVPILAIQFLLVRSVSSLNLTNEYLNHKCFVSEGKYKHGDKYENNLNVLNKNVLSYDLTSGFLHVSHGEGPDSVTIILQCRGDSFGSNCRSCYTTAIDGFHRRCQRNKGGIIWYDQCFLVISTIKPQLPRKIDFKNTFSMHNPNNVSSEPGSFDKMTRDFLYKLVQKASYPTVVEHQSTYYAAGEKKLGKRKLYAMMQCASDILQCKVCLEWCIRELPKCCDGKQGGRILGMSCNLRYELYPFLRR</sequence>
<keyword id="KW-1185">Reference proteome</keyword>
<keyword id="KW-0677">Repeat</keyword>
<keyword id="KW-0964">Secreted</keyword>
<keyword id="KW-0732">Signal</keyword>
<dbReference type="EMBL" id="AB028622">
    <property type="protein sequence ID" value="BAB01388.1"/>
    <property type="molecule type" value="Genomic_DNA"/>
</dbReference>
<dbReference type="EMBL" id="CP002686">
    <property type="protein sequence ID" value="AEE76582.1"/>
    <property type="molecule type" value="Genomic_DNA"/>
</dbReference>
<dbReference type="RefSeq" id="NP_188843.2">
    <property type="nucleotide sequence ID" value="NM_113101.3"/>
</dbReference>
<dbReference type="SMR" id="Q9LRK2"/>
<dbReference type="FunCoup" id="Q9LRK2">
    <property type="interactions" value="18"/>
</dbReference>
<dbReference type="STRING" id="3702.Q9LRK2"/>
<dbReference type="PaxDb" id="3702-AT3G22050.1"/>
<dbReference type="ProteomicsDB" id="224410"/>
<dbReference type="EnsemblPlants" id="AT3G22050.1">
    <property type="protein sequence ID" value="AT3G22050.1"/>
    <property type="gene ID" value="AT3G22050"/>
</dbReference>
<dbReference type="GeneID" id="821765"/>
<dbReference type="Gramene" id="AT3G22050.1">
    <property type="protein sequence ID" value="AT3G22050.1"/>
    <property type="gene ID" value="AT3G22050"/>
</dbReference>
<dbReference type="KEGG" id="ath:AT3G22050"/>
<dbReference type="Araport" id="AT3G22050"/>
<dbReference type="TAIR" id="AT3G22050"/>
<dbReference type="eggNOG" id="ENOG502QPWH">
    <property type="taxonomic scope" value="Eukaryota"/>
</dbReference>
<dbReference type="HOGENOM" id="CLU_000288_35_0_1"/>
<dbReference type="InParanoid" id="Q9LRK2"/>
<dbReference type="OMA" id="EWCIREL"/>
<dbReference type="PhylomeDB" id="Q9LRK2"/>
<dbReference type="PRO" id="PR:Q9LRK2"/>
<dbReference type="Proteomes" id="UP000006548">
    <property type="component" value="Chromosome 3"/>
</dbReference>
<dbReference type="ExpressionAtlas" id="Q9LRK2">
    <property type="expression patterns" value="baseline and differential"/>
</dbReference>
<dbReference type="GO" id="GO:0005576">
    <property type="term" value="C:extracellular region"/>
    <property type="evidence" value="ECO:0007669"/>
    <property type="project" value="UniProtKB-SubCell"/>
</dbReference>
<dbReference type="CDD" id="cd23509">
    <property type="entry name" value="Gnk2-like"/>
    <property type="match status" value="2"/>
</dbReference>
<dbReference type="Gene3D" id="3.30.430.20">
    <property type="entry name" value="Gnk2 domain, C-X8-C-X2-C motif"/>
    <property type="match status" value="2"/>
</dbReference>
<dbReference type="InterPro" id="IPR050581">
    <property type="entry name" value="CRR_secretory_protein"/>
</dbReference>
<dbReference type="InterPro" id="IPR002902">
    <property type="entry name" value="GNK2"/>
</dbReference>
<dbReference type="InterPro" id="IPR038408">
    <property type="entry name" value="GNK2_sf"/>
</dbReference>
<dbReference type="PANTHER" id="PTHR32411:SF54">
    <property type="entry name" value="CYSTEINE-RICH REPEAT SECRETORY PROTEIN 29-RELATED"/>
    <property type="match status" value="1"/>
</dbReference>
<dbReference type="PANTHER" id="PTHR32411">
    <property type="entry name" value="CYSTEINE-RICH REPEAT SECRETORY PROTEIN 38-RELATED"/>
    <property type="match status" value="1"/>
</dbReference>
<dbReference type="Pfam" id="PF01657">
    <property type="entry name" value="Stress-antifung"/>
    <property type="match status" value="2"/>
</dbReference>
<dbReference type="PROSITE" id="PS51473">
    <property type="entry name" value="GNK2"/>
    <property type="match status" value="2"/>
</dbReference>
<name>CRR35_ARATH</name>
<evidence type="ECO:0000255" key="1"/>
<evidence type="ECO:0000255" key="2">
    <source>
        <dbReference type="PROSITE-ProRule" id="PRU00806"/>
    </source>
</evidence>
<evidence type="ECO:0000305" key="3"/>
<organism>
    <name type="scientific">Arabidopsis thaliana</name>
    <name type="common">Mouse-ear cress</name>
    <dbReference type="NCBI Taxonomy" id="3702"/>
    <lineage>
        <taxon>Eukaryota</taxon>
        <taxon>Viridiplantae</taxon>
        <taxon>Streptophyta</taxon>
        <taxon>Embryophyta</taxon>
        <taxon>Tracheophyta</taxon>
        <taxon>Spermatophyta</taxon>
        <taxon>Magnoliopsida</taxon>
        <taxon>eudicotyledons</taxon>
        <taxon>Gunneridae</taxon>
        <taxon>Pentapetalae</taxon>
        <taxon>rosids</taxon>
        <taxon>malvids</taxon>
        <taxon>Brassicales</taxon>
        <taxon>Brassicaceae</taxon>
        <taxon>Camelineae</taxon>
        <taxon>Arabidopsis</taxon>
    </lineage>
</organism>